<organism>
    <name type="scientific">Pinus koraiensis</name>
    <name type="common">Korean pine</name>
    <dbReference type="NCBI Taxonomy" id="88728"/>
    <lineage>
        <taxon>Eukaryota</taxon>
        <taxon>Viridiplantae</taxon>
        <taxon>Streptophyta</taxon>
        <taxon>Embryophyta</taxon>
        <taxon>Tracheophyta</taxon>
        <taxon>Spermatophyta</taxon>
        <taxon>Pinopsida</taxon>
        <taxon>Pinidae</taxon>
        <taxon>Conifers I</taxon>
        <taxon>Pinales</taxon>
        <taxon>Pinaceae</taxon>
        <taxon>Pinus</taxon>
        <taxon>Pinus subgen. Strobus</taxon>
    </lineage>
</organism>
<keyword id="KW-0150">Chloroplast</keyword>
<keyword id="KW-0240">DNA-directed RNA polymerase</keyword>
<keyword id="KW-0460">Magnesium</keyword>
<keyword id="KW-0479">Metal-binding</keyword>
<keyword id="KW-0548">Nucleotidyltransferase</keyword>
<keyword id="KW-0934">Plastid</keyword>
<keyword id="KW-0804">Transcription</keyword>
<keyword id="KW-0808">Transferase</keyword>
<keyword id="KW-0862">Zinc</keyword>
<comment type="function">
    <text evidence="1">DNA-dependent RNA polymerase catalyzes the transcription of DNA into RNA using the four ribonucleoside triphosphates as substrates.</text>
</comment>
<comment type="catalytic activity">
    <reaction evidence="1">
        <text>RNA(n) + a ribonucleoside 5'-triphosphate = RNA(n+1) + diphosphate</text>
        <dbReference type="Rhea" id="RHEA:21248"/>
        <dbReference type="Rhea" id="RHEA-COMP:14527"/>
        <dbReference type="Rhea" id="RHEA-COMP:17342"/>
        <dbReference type="ChEBI" id="CHEBI:33019"/>
        <dbReference type="ChEBI" id="CHEBI:61557"/>
        <dbReference type="ChEBI" id="CHEBI:140395"/>
        <dbReference type="EC" id="2.7.7.6"/>
    </reaction>
</comment>
<comment type="cofactor">
    <cofactor evidence="1">
        <name>Mg(2+)</name>
        <dbReference type="ChEBI" id="CHEBI:18420"/>
    </cofactor>
    <text evidence="1">Binds 1 Mg(2+) ion per subunit.</text>
</comment>
<comment type="cofactor">
    <cofactor evidence="1">
        <name>Zn(2+)</name>
        <dbReference type="ChEBI" id="CHEBI:29105"/>
    </cofactor>
    <text evidence="1">Binds 1 Zn(2+) ion per subunit.</text>
</comment>
<comment type="subunit">
    <text evidence="1">In plastids the minimal PEP RNA polymerase catalytic core is composed of four subunits: alpha, beta, beta', and beta''. When a (nuclear-encoded) sigma factor is associated with the core the holoenzyme is formed, which can initiate transcription.</text>
</comment>
<comment type="subcellular location">
    <subcellularLocation>
        <location evidence="1">Plastid</location>
        <location evidence="1">Chloroplast</location>
    </subcellularLocation>
</comment>
<comment type="similarity">
    <text evidence="1">Belongs to the RNA polymerase beta' chain family. RpoC1 subfamily.</text>
</comment>
<evidence type="ECO:0000255" key="1">
    <source>
        <dbReference type="HAMAP-Rule" id="MF_01323"/>
    </source>
</evidence>
<protein>
    <recommendedName>
        <fullName evidence="1">DNA-directed RNA polymerase subunit beta'</fullName>
        <ecNumber evidence="1">2.7.7.6</ecNumber>
    </recommendedName>
    <alternativeName>
        <fullName evidence="1">PEP</fullName>
    </alternativeName>
    <alternativeName>
        <fullName evidence="1">Plastid-encoded RNA polymerase subunit beta'</fullName>
        <shortName evidence="1">RNA polymerase subunit beta'</shortName>
    </alternativeName>
</protein>
<accession>Q85WS8</accession>
<gene>
    <name evidence="1" type="primary">rpoC1</name>
</gene>
<geneLocation type="chloroplast"/>
<sequence>MIEQNKHQQLRIGLASPEQICAWSEKILPNGEIVGQVTKPYTLHYETNKPERDGSFCERIFGPIKSRVCACGNSPGIGNEKIDSKFCTQCGVEFVDSRIRRYQMGYIKLACPVVHVWYLKRLPSYIANLLAKTRKELEGPVYCDLFLARPIAKKPTLLRSRGTFNYEIQSWKDIIPHYLSARPHYLFARGSGTFKEREIATGGDAIGEQLTGLDLQMIIDRSHMEWKNLVELKWNRLEENQESTVDRWEDEKIRRRKDFLVGRIKLAKHFLRTNIEPKWMVLCLLPVLPPEPRPIVQLGEGGLITSSDLNELYRRVINRNNTLTNLLARSGSESFVICQKKLIQEAVDALLDNGICGQPMRDSHDRPYKSFSDVIEGKEGRFRENLLGKRVDYSGRSVIVVGPFLSLYQCGLPSEIAIELFQAFVIRSLIGRHIAPNLRAAKSMIRDKGPIVWEVLQEVMQGHPVLLNRAPTLHKLGIQAFQPILVEGRAIRLHPSVCGGFNADFDGDQMAVHVPLSLEARAEARLLMFSETNLLSPAIGDPISIPTQDMLLGLYISTVENSQGIYGNRYHPYHSEKKSFSCKKPSFYSYDDVLRAYRQKRIDLYSPLWLRWGELDLRIITSVNQEAPIEVQYESLGTFHEIHEHYRIRKGRMGEILNIYIRTTVGRTRFNREMEEAIQGFACFEHPKKSLPALRI</sequence>
<dbReference type="EC" id="2.7.7.6" evidence="1"/>
<dbReference type="EMBL" id="AY228468">
    <property type="protein sequence ID" value="AAO74141.1"/>
    <property type="molecule type" value="Genomic_DNA"/>
</dbReference>
<dbReference type="RefSeq" id="NP_817159.1">
    <property type="nucleotide sequence ID" value="NC_004677.2"/>
</dbReference>
<dbReference type="SMR" id="Q85WS8"/>
<dbReference type="GeneID" id="806983"/>
<dbReference type="GO" id="GO:0009507">
    <property type="term" value="C:chloroplast"/>
    <property type="evidence" value="ECO:0007669"/>
    <property type="project" value="UniProtKB-SubCell"/>
</dbReference>
<dbReference type="GO" id="GO:0000428">
    <property type="term" value="C:DNA-directed RNA polymerase complex"/>
    <property type="evidence" value="ECO:0007669"/>
    <property type="project" value="UniProtKB-KW"/>
</dbReference>
<dbReference type="GO" id="GO:0005739">
    <property type="term" value="C:mitochondrion"/>
    <property type="evidence" value="ECO:0007669"/>
    <property type="project" value="GOC"/>
</dbReference>
<dbReference type="GO" id="GO:0003677">
    <property type="term" value="F:DNA binding"/>
    <property type="evidence" value="ECO:0007669"/>
    <property type="project" value="UniProtKB-UniRule"/>
</dbReference>
<dbReference type="GO" id="GO:0003899">
    <property type="term" value="F:DNA-directed RNA polymerase activity"/>
    <property type="evidence" value="ECO:0007669"/>
    <property type="project" value="UniProtKB-UniRule"/>
</dbReference>
<dbReference type="GO" id="GO:0000287">
    <property type="term" value="F:magnesium ion binding"/>
    <property type="evidence" value="ECO:0007669"/>
    <property type="project" value="UniProtKB-UniRule"/>
</dbReference>
<dbReference type="GO" id="GO:0008270">
    <property type="term" value="F:zinc ion binding"/>
    <property type="evidence" value="ECO:0007669"/>
    <property type="project" value="UniProtKB-UniRule"/>
</dbReference>
<dbReference type="GO" id="GO:0006351">
    <property type="term" value="P:DNA-templated transcription"/>
    <property type="evidence" value="ECO:0007669"/>
    <property type="project" value="UniProtKB-UniRule"/>
</dbReference>
<dbReference type="Gene3D" id="1.10.40.90">
    <property type="match status" value="1"/>
</dbReference>
<dbReference type="Gene3D" id="2.40.40.20">
    <property type="match status" value="1"/>
</dbReference>
<dbReference type="Gene3D" id="4.10.860.120">
    <property type="entry name" value="RNA polymerase II, clamp domain"/>
    <property type="match status" value="1"/>
</dbReference>
<dbReference type="Gene3D" id="1.10.274.100">
    <property type="entry name" value="RNA polymerase Rpb1, domain 3"/>
    <property type="match status" value="1"/>
</dbReference>
<dbReference type="HAMAP" id="MF_01323">
    <property type="entry name" value="RNApol_bact_RpoC1"/>
    <property type="match status" value="1"/>
</dbReference>
<dbReference type="InterPro" id="IPR045867">
    <property type="entry name" value="DNA-dir_RpoC_beta_prime"/>
</dbReference>
<dbReference type="InterPro" id="IPR000722">
    <property type="entry name" value="RNA_pol_asu"/>
</dbReference>
<dbReference type="InterPro" id="IPR006592">
    <property type="entry name" value="RNA_pol_N"/>
</dbReference>
<dbReference type="InterPro" id="IPR007080">
    <property type="entry name" value="RNA_pol_Rpb1_1"/>
</dbReference>
<dbReference type="InterPro" id="IPR007066">
    <property type="entry name" value="RNA_pol_Rpb1_3"/>
</dbReference>
<dbReference type="InterPro" id="IPR042102">
    <property type="entry name" value="RNA_pol_Rpb1_3_sf"/>
</dbReference>
<dbReference type="InterPro" id="IPR044893">
    <property type="entry name" value="RNA_pol_Rpb1_clamp_domain"/>
</dbReference>
<dbReference type="InterPro" id="IPR034678">
    <property type="entry name" value="RNApol_RpoC1"/>
</dbReference>
<dbReference type="PANTHER" id="PTHR19376">
    <property type="entry name" value="DNA-DIRECTED RNA POLYMERASE"/>
    <property type="match status" value="1"/>
</dbReference>
<dbReference type="PANTHER" id="PTHR19376:SF54">
    <property type="entry name" value="DNA-DIRECTED RNA POLYMERASE SUBUNIT BETA"/>
    <property type="match status" value="1"/>
</dbReference>
<dbReference type="Pfam" id="PF04997">
    <property type="entry name" value="RNA_pol_Rpb1_1"/>
    <property type="match status" value="1"/>
</dbReference>
<dbReference type="Pfam" id="PF00623">
    <property type="entry name" value="RNA_pol_Rpb1_2"/>
    <property type="match status" value="2"/>
</dbReference>
<dbReference type="Pfam" id="PF04983">
    <property type="entry name" value="RNA_pol_Rpb1_3"/>
    <property type="match status" value="1"/>
</dbReference>
<dbReference type="SMART" id="SM00663">
    <property type="entry name" value="RPOLA_N"/>
    <property type="match status" value="1"/>
</dbReference>
<dbReference type="SUPFAM" id="SSF64484">
    <property type="entry name" value="beta and beta-prime subunits of DNA dependent RNA-polymerase"/>
    <property type="match status" value="1"/>
</dbReference>
<reference key="1">
    <citation type="submission" date="2003-02" db="EMBL/GenBank/DDBJ databases">
        <title>Complete nucleotide sequence of Pinus koraiensis.</title>
        <authorList>
            <person name="Noh E.W."/>
            <person name="Lee J.S."/>
            <person name="Choi Y.I."/>
            <person name="Han M.S."/>
            <person name="Yi Y.S."/>
            <person name="Han S.U."/>
        </authorList>
    </citation>
    <scope>NUCLEOTIDE SEQUENCE [LARGE SCALE GENOMIC DNA]</scope>
    <source>
        <strain>KangWon16</strain>
    </source>
</reference>
<feature type="chain" id="PRO_0000067890" description="DNA-directed RNA polymerase subunit beta'">
    <location>
        <begin position="1"/>
        <end position="696"/>
    </location>
</feature>
<feature type="binding site" evidence="1">
    <location>
        <position position="69"/>
    </location>
    <ligand>
        <name>Zn(2+)</name>
        <dbReference type="ChEBI" id="CHEBI:29105"/>
    </ligand>
</feature>
<feature type="binding site" evidence="1">
    <location>
        <position position="71"/>
    </location>
    <ligand>
        <name>Zn(2+)</name>
        <dbReference type="ChEBI" id="CHEBI:29105"/>
    </ligand>
</feature>
<feature type="binding site" evidence="1">
    <location>
        <position position="87"/>
    </location>
    <ligand>
        <name>Zn(2+)</name>
        <dbReference type="ChEBI" id="CHEBI:29105"/>
    </ligand>
</feature>
<feature type="binding site" evidence="1">
    <location>
        <position position="90"/>
    </location>
    <ligand>
        <name>Zn(2+)</name>
        <dbReference type="ChEBI" id="CHEBI:29105"/>
    </ligand>
</feature>
<feature type="binding site" evidence="1">
    <location>
        <position position="504"/>
    </location>
    <ligand>
        <name>Mg(2+)</name>
        <dbReference type="ChEBI" id="CHEBI:18420"/>
    </ligand>
</feature>
<feature type="binding site" evidence="1">
    <location>
        <position position="506"/>
    </location>
    <ligand>
        <name>Mg(2+)</name>
        <dbReference type="ChEBI" id="CHEBI:18420"/>
    </ligand>
</feature>
<feature type="binding site" evidence="1">
    <location>
        <position position="508"/>
    </location>
    <ligand>
        <name>Mg(2+)</name>
        <dbReference type="ChEBI" id="CHEBI:18420"/>
    </ligand>
</feature>
<name>RPOC1_PINKO</name>
<proteinExistence type="inferred from homology"/>